<feature type="chain" id="PRO_1000044717" description="UPF0761 membrane protein CGSHiEE_01670">
    <location>
        <begin position="1"/>
        <end position="269"/>
    </location>
</feature>
<feature type="transmembrane region" description="Helical" evidence="1">
    <location>
        <begin position="32"/>
        <end position="52"/>
    </location>
</feature>
<feature type="transmembrane region" description="Helical" evidence="1">
    <location>
        <begin position="89"/>
        <end position="109"/>
    </location>
</feature>
<feature type="transmembrane region" description="Helical" evidence="1">
    <location>
        <begin position="128"/>
        <end position="148"/>
    </location>
</feature>
<feature type="transmembrane region" description="Helical" evidence="1">
    <location>
        <begin position="168"/>
        <end position="188"/>
    </location>
</feature>
<feature type="transmembrane region" description="Helical" evidence="1">
    <location>
        <begin position="203"/>
        <end position="223"/>
    </location>
</feature>
<feature type="transmembrane region" description="Helical" evidence="1">
    <location>
        <begin position="232"/>
        <end position="252"/>
    </location>
</feature>
<accession>A5UAL3</accession>
<evidence type="ECO:0000255" key="1">
    <source>
        <dbReference type="HAMAP-Rule" id="MF_00672"/>
    </source>
</evidence>
<proteinExistence type="inferred from homology"/>
<protein>
    <recommendedName>
        <fullName evidence="1">UPF0761 membrane protein CGSHiEE_01670</fullName>
    </recommendedName>
</protein>
<dbReference type="EMBL" id="CP000671">
    <property type="protein sequence ID" value="ABQ97814.1"/>
    <property type="molecule type" value="Genomic_DNA"/>
</dbReference>
<dbReference type="KEGG" id="hip:CGSHiEE_01670"/>
<dbReference type="HOGENOM" id="CLU_032288_0_0_6"/>
<dbReference type="GO" id="GO:0005886">
    <property type="term" value="C:plasma membrane"/>
    <property type="evidence" value="ECO:0007669"/>
    <property type="project" value="UniProtKB-SubCell"/>
</dbReference>
<dbReference type="HAMAP" id="MF_00672">
    <property type="entry name" value="UPF0761"/>
    <property type="match status" value="1"/>
</dbReference>
<dbReference type="InterPro" id="IPR023679">
    <property type="entry name" value="UPF0761_bac"/>
</dbReference>
<dbReference type="InterPro" id="IPR017039">
    <property type="entry name" value="Virul_fac_BrkB"/>
</dbReference>
<dbReference type="NCBIfam" id="NF002457">
    <property type="entry name" value="PRK01637.1"/>
    <property type="match status" value="1"/>
</dbReference>
<dbReference type="NCBIfam" id="TIGR00765">
    <property type="entry name" value="yihY_not_rbn"/>
    <property type="match status" value="1"/>
</dbReference>
<dbReference type="PANTHER" id="PTHR30213">
    <property type="entry name" value="INNER MEMBRANE PROTEIN YHJD"/>
    <property type="match status" value="1"/>
</dbReference>
<dbReference type="PANTHER" id="PTHR30213:SF0">
    <property type="entry name" value="UPF0761 MEMBRANE PROTEIN YIHY"/>
    <property type="match status" value="1"/>
</dbReference>
<dbReference type="Pfam" id="PF03631">
    <property type="entry name" value="Virul_fac_BrkB"/>
    <property type="match status" value="1"/>
</dbReference>
<dbReference type="PIRSF" id="PIRSF035875">
    <property type="entry name" value="RNase_BN"/>
    <property type="match status" value="1"/>
</dbReference>
<name>Y1670_HAEIE</name>
<comment type="subcellular location">
    <subcellularLocation>
        <location evidence="1">Cell inner membrane</location>
        <topology evidence="1">Multi-pass membrane protein</topology>
    </subcellularLocation>
</comment>
<comment type="similarity">
    <text evidence="1">Belongs to the UPF0761 family.</text>
</comment>
<sequence length="269" mass="30225">MISLKNFGLLFWKRFSENKLNQVAGALTYSTMLAMVPLVMVIFSIFSAFPVFNEVTGELKEMIFTNFAPSASDMVGEYIDQFVSNSKKMSAVGIVSLIAVALMLINNIDRTLNSIWHNSQSRSPLSSFAIYWMILTLGPLIIGVSIGISSYIKIMFEQSEHLSLGLKLLSFVPFLFTWFIFTLIYTVVPNKKVKIKHSAYGAFLAAIFFTLGKQAFTWYIVTFPSYQLIYGAMATLPIMLLWIQISWLVVLVGAQLASTLDEIGEQIEQ</sequence>
<reference key="1">
    <citation type="journal article" date="2007" name="Genome Biol.">
        <title>Characterization and modeling of the Haemophilus influenzae core and supragenomes based on the complete genomic sequences of Rd and 12 clinical nontypeable strains.</title>
        <authorList>
            <person name="Hogg J.S."/>
            <person name="Hu F.Z."/>
            <person name="Janto B."/>
            <person name="Boissy R."/>
            <person name="Hayes J."/>
            <person name="Keefe R."/>
            <person name="Post J.C."/>
            <person name="Ehrlich G.D."/>
        </authorList>
    </citation>
    <scope>NUCLEOTIDE SEQUENCE [LARGE SCALE GENOMIC DNA]</scope>
    <source>
        <strain>PittEE</strain>
    </source>
</reference>
<keyword id="KW-0997">Cell inner membrane</keyword>
<keyword id="KW-1003">Cell membrane</keyword>
<keyword id="KW-0472">Membrane</keyword>
<keyword id="KW-0812">Transmembrane</keyword>
<keyword id="KW-1133">Transmembrane helix</keyword>
<organism>
    <name type="scientific">Haemophilus influenzae (strain PittEE)</name>
    <dbReference type="NCBI Taxonomy" id="374930"/>
    <lineage>
        <taxon>Bacteria</taxon>
        <taxon>Pseudomonadati</taxon>
        <taxon>Pseudomonadota</taxon>
        <taxon>Gammaproteobacteria</taxon>
        <taxon>Pasteurellales</taxon>
        <taxon>Pasteurellaceae</taxon>
        <taxon>Haemophilus</taxon>
    </lineage>
</organism>
<gene>
    <name type="ordered locus">CGSHiEE_01670</name>
</gene>